<comment type="function">
    <text evidence="2">GTP hydrolase that promotes the GTP-dependent binding of aminoacyl-tRNA to the A-site of ribosomes during protein biosynthesis.</text>
</comment>
<comment type="catalytic activity">
    <reaction evidence="2">
        <text>GTP + H2O = GDP + phosphate + H(+)</text>
        <dbReference type="Rhea" id="RHEA:19669"/>
        <dbReference type="ChEBI" id="CHEBI:15377"/>
        <dbReference type="ChEBI" id="CHEBI:15378"/>
        <dbReference type="ChEBI" id="CHEBI:37565"/>
        <dbReference type="ChEBI" id="CHEBI:43474"/>
        <dbReference type="ChEBI" id="CHEBI:58189"/>
        <dbReference type="EC" id="3.6.5.3"/>
    </reaction>
    <physiologicalReaction direction="left-to-right" evidence="2">
        <dbReference type="Rhea" id="RHEA:19670"/>
    </physiologicalReaction>
</comment>
<comment type="subunit">
    <text evidence="2">Monomer.</text>
</comment>
<comment type="subcellular location">
    <subcellularLocation>
        <location evidence="2">Cytoplasm</location>
    </subcellularLocation>
</comment>
<comment type="similarity">
    <text evidence="2">Belongs to the TRAFAC class translation factor GTPase superfamily. Classic translation factor GTPase family. EF-Tu/EF-1A subfamily.</text>
</comment>
<comment type="sequence caution" evidence="3">
    <conflict type="erroneous initiation">
        <sequence resource="EMBL-CDS" id="BAB13219"/>
    </conflict>
</comment>
<sequence length="394" mass="43465">MSKEKFQRLKPHINVGTIGHVDHGKTTLTAAITTVLSKKFGGSARAFDQIDNAPEEKARGITINTSHVEYDTEFRHYAHVDCPGHADYIKNMITGAAQMDGAILVVAATDGPMPQTREHILLGRQVGVPYIIVFLNKCDMVDDEELLELVEMEVRDLLTQYDFPGDDTPIIRGSALKALEGDPEWESKIIDLSKFLDSYIPEPKRAVDQPFLLPIEDVFSISGRGTVVTGRVEKGIIKVGEEVEIVGIKKTTKTTCTGVEMFRKLLDEGRAGENVGVLLRGTKRDEIERGQVLAKPGSIHPHTTFESEVYVLSKEEGGRHTPFFKGYRPQFYFRTTDVTGSIELPEGIEMVMPGDNIKMTVTLINPIAMADGLRFAIREGGRTVGAGVVSKVLL</sequence>
<gene>
    <name evidence="2" type="primary">tuf</name>
    <name type="synonym">tufA</name>
    <name type="ordered locus">BU526</name>
</gene>
<proteinExistence type="inferred from homology"/>
<protein>
    <recommendedName>
        <fullName evidence="2">Elongation factor Tu</fullName>
        <shortName evidence="2">EF-Tu</shortName>
        <ecNumber evidence="2">3.6.5.3</ecNumber>
    </recommendedName>
</protein>
<accession>O31297</accession>
<accession>Q9AQA1</accession>
<keyword id="KW-0963">Cytoplasm</keyword>
<keyword id="KW-0251">Elongation factor</keyword>
<keyword id="KW-0342">GTP-binding</keyword>
<keyword id="KW-0378">Hydrolase</keyword>
<keyword id="KW-0460">Magnesium</keyword>
<keyword id="KW-0479">Metal-binding</keyword>
<keyword id="KW-0547">Nucleotide-binding</keyword>
<keyword id="KW-0648">Protein biosynthesis</keyword>
<keyword id="KW-1185">Reference proteome</keyword>
<feature type="chain" id="PRO_0000091296" description="Elongation factor Tu">
    <location>
        <begin position="1"/>
        <end position="394"/>
    </location>
</feature>
<feature type="domain" description="tr-type G">
    <location>
        <begin position="10"/>
        <end position="204"/>
    </location>
</feature>
<feature type="region of interest" description="G1" evidence="1">
    <location>
        <begin position="19"/>
        <end position="26"/>
    </location>
</feature>
<feature type="region of interest" description="G2" evidence="1">
    <location>
        <begin position="60"/>
        <end position="64"/>
    </location>
</feature>
<feature type="region of interest" description="G3" evidence="1">
    <location>
        <begin position="81"/>
        <end position="84"/>
    </location>
</feature>
<feature type="region of interest" description="G4" evidence="1">
    <location>
        <begin position="136"/>
        <end position="139"/>
    </location>
</feature>
<feature type="region of interest" description="G5" evidence="1">
    <location>
        <begin position="174"/>
        <end position="176"/>
    </location>
</feature>
<feature type="binding site" evidence="2">
    <location>
        <begin position="19"/>
        <end position="26"/>
    </location>
    <ligand>
        <name>GTP</name>
        <dbReference type="ChEBI" id="CHEBI:37565"/>
    </ligand>
</feature>
<feature type="binding site" evidence="2">
    <location>
        <position position="26"/>
    </location>
    <ligand>
        <name>Mg(2+)</name>
        <dbReference type="ChEBI" id="CHEBI:18420"/>
    </ligand>
</feature>
<feature type="binding site" evidence="2">
    <location>
        <begin position="81"/>
        <end position="85"/>
    </location>
    <ligand>
        <name>GTP</name>
        <dbReference type="ChEBI" id="CHEBI:37565"/>
    </ligand>
</feature>
<feature type="binding site" evidence="2">
    <location>
        <begin position="136"/>
        <end position="139"/>
    </location>
    <ligand>
        <name>GTP</name>
        <dbReference type="ChEBI" id="CHEBI:37565"/>
    </ligand>
</feature>
<feature type="sequence conflict" description="In Ref. 2 and 3." evidence="3" ref="2 3">
    <original>I</original>
    <variation>M</variation>
    <location>
        <position position="89"/>
    </location>
</feature>
<reference key="1">
    <citation type="journal article" date="2000" name="Nature">
        <title>Genome sequence of the endocellular bacterial symbiont of aphids Buchnera sp. APS.</title>
        <authorList>
            <person name="Shigenobu S."/>
            <person name="Watanabe H."/>
            <person name="Hattori M."/>
            <person name="Sakaki Y."/>
            <person name="Ishikawa H."/>
        </authorList>
    </citation>
    <scope>NUCLEOTIDE SEQUENCE [LARGE SCALE GENOMIC DNA]</scope>
    <source>
        <strain>APS</strain>
    </source>
</reference>
<reference key="2">
    <citation type="journal article" date="1998" name="Mol. Biol. Evol.">
        <title>Evolutionary rates for tuf genes in endosymbionts of aphids.</title>
        <authorList>
            <person name="Brynnel E.U."/>
            <person name="Kurland C.G."/>
            <person name="Moran N.A."/>
            <person name="Andersson S.G."/>
        </authorList>
    </citation>
    <scope>NUCLEOTIDE SEQUENCE [GENOMIC DNA] OF 20-384</scope>
</reference>
<reference key="3">
    <citation type="submission" date="1999-12" db="EMBL/GenBank/DDBJ databases">
        <title>Accelerated evolutionary rates at biosynthetic loci of Buchnera-Uroleucon.</title>
        <authorList>
            <person name="Wernegreen J.J."/>
            <person name="Moran N.A."/>
        </authorList>
    </citation>
    <scope>NUCLEOTIDE SEQUENCE [GENOMIC DNA] OF 70-313</scope>
</reference>
<evidence type="ECO:0000250" key="1"/>
<evidence type="ECO:0000255" key="2">
    <source>
        <dbReference type="HAMAP-Rule" id="MF_00118"/>
    </source>
</evidence>
<evidence type="ECO:0000305" key="3"/>
<name>EFTU_BUCAI</name>
<dbReference type="EC" id="3.6.5.3" evidence="2"/>
<dbReference type="EMBL" id="BA000003">
    <property type="protein sequence ID" value="BAB13219.1"/>
    <property type="status" value="ALT_INIT"/>
    <property type="molecule type" value="Genomic_DNA"/>
</dbReference>
<dbReference type="EMBL" id="Y12307">
    <property type="protein sequence ID" value="CAA72974.1"/>
    <property type="molecule type" value="Genomic_DNA"/>
</dbReference>
<dbReference type="EMBL" id="AF217552">
    <property type="protein sequence ID" value="AAK01023.1"/>
    <property type="molecule type" value="Genomic_DNA"/>
</dbReference>
<dbReference type="RefSeq" id="NP_240333.2">
    <property type="nucleotide sequence ID" value="NC_002528.1"/>
</dbReference>
<dbReference type="RefSeq" id="WP_009874477.1">
    <property type="nucleotide sequence ID" value="NZ_AP036055.1"/>
</dbReference>
<dbReference type="SMR" id="O31297"/>
<dbReference type="STRING" id="563178.BUAP5A_519"/>
<dbReference type="EnsemblBacteria" id="BAB13219">
    <property type="protein sequence ID" value="BAB13219"/>
    <property type="gene ID" value="BAB13219"/>
</dbReference>
<dbReference type="KEGG" id="buc:BU526"/>
<dbReference type="PATRIC" id="fig|107806.10.peg.531"/>
<dbReference type="eggNOG" id="COG0050">
    <property type="taxonomic scope" value="Bacteria"/>
</dbReference>
<dbReference type="HOGENOM" id="CLU_007265_0_2_6"/>
<dbReference type="Proteomes" id="UP000001806">
    <property type="component" value="Chromosome"/>
</dbReference>
<dbReference type="GO" id="GO:0005829">
    <property type="term" value="C:cytosol"/>
    <property type="evidence" value="ECO:0007669"/>
    <property type="project" value="TreeGrafter"/>
</dbReference>
<dbReference type="GO" id="GO:0005525">
    <property type="term" value="F:GTP binding"/>
    <property type="evidence" value="ECO:0007669"/>
    <property type="project" value="UniProtKB-UniRule"/>
</dbReference>
<dbReference type="GO" id="GO:0003924">
    <property type="term" value="F:GTPase activity"/>
    <property type="evidence" value="ECO:0007669"/>
    <property type="project" value="InterPro"/>
</dbReference>
<dbReference type="GO" id="GO:0097216">
    <property type="term" value="F:guanosine tetraphosphate binding"/>
    <property type="evidence" value="ECO:0007669"/>
    <property type="project" value="UniProtKB-ARBA"/>
</dbReference>
<dbReference type="GO" id="GO:0003746">
    <property type="term" value="F:translation elongation factor activity"/>
    <property type="evidence" value="ECO:0007669"/>
    <property type="project" value="UniProtKB-UniRule"/>
</dbReference>
<dbReference type="CDD" id="cd01884">
    <property type="entry name" value="EF_Tu"/>
    <property type="match status" value="1"/>
</dbReference>
<dbReference type="CDD" id="cd03697">
    <property type="entry name" value="EFTU_II"/>
    <property type="match status" value="1"/>
</dbReference>
<dbReference type="CDD" id="cd03707">
    <property type="entry name" value="EFTU_III"/>
    <property type="match status" value="1"/>
</dbReference>
<dbReference type="FunFam" id="2.40.30.10:FF:000001">
    <property type="entry name" value="Elongation factor Tu"/>
    <property type="match status" value="1"/>
</dbReference>
<dbReference type="FunFam" id="3.40.50.300:FF:000003">
    <property type="entry name" value="Elongation factor Tu"/>
    <property type="match status" value="1"/>
</dbReference>
<dbReference type="Gene3D" id="3.40.50.300">
    <property type="entry name" value="P-loop containing nucleotide triphosphate hydrolases"/>
    <property type="match status" value="1"/>
</dbReference>
<dbReference type="Gene3D" id="2.40.30.10">
    <property type="entry name" value="Translation factors"/>
    <property type="match status" value="2"/>
</dbReference>
<dbReference type="HAMAP" id="MF_00118_B">
    <property type="entry name" value="EF_Tu_B"/>
    <property type="match status" value="1"/>
</dbReference>
<dbReference type="InterPro" id="IPR041709">
    <property type="entry name" value="EF-Tu_GTP-bd"/>
</dbReference>
<dbReference type="InterPro" id="IPR050055">
    <property type="entry name" value="EF-Tu_GTPase"/>
</dbReference>
<dbReference type="InterPro" id="IPR004161">
    <property type="entry name" value="EFTu-like_2"/>
</dbReference>
<dbReference type="InterPro" id="IPR033720">
    <property type="entry name" value="EFTU_2"/>
</dbReference>
<dbReference type="InterPro" id="IPR031157">
    <property type="entry name" value="G_TR_CS"/>
</dbReference>
<dbReference type="InterPro" id="IPR027417">
    <property type="entry name" value="P-loop_NTPase"/>
</dbReference>
<dbReference type="InterPro" id="IPR005225">
    <property type="entry name" value="Small_GTP-bd"/>
</dbReference>
<dbReference type="InterPro" id="IPR000795">
    <property type="entry name" value="T_Tr_GTP-bd_dom"/>
</dbReference>
<dbReference type="InterPro" id="IPR009000">
    <property type="entry name" value="Transl_B-barrel_sf"/>
</dbReference>
<dbReference type="InterPro" id="IPR009001">
    <property type="entry name" value="Transl_elong_EF1A/Init_IF2_C"/>
</dbReference>
<dbReference type="InterPro" id="IPR004541">
    <property type="entry name" value="Transl_elong_EFTu/EF1A_bac/org"/>
</dbReference>
<dbReference type="InterPro" id="IPR004160">
    <property type="entry name" value="Transl_elong_EFTu/EF1A_C"/>
</dbReference>
<dbReference type="NCBIfam" id="TIGR00485">
    <property type="entry name" value="EF-Tu"/>
    <property type="match status" value="1"/>
</dbReference>
<dbReference type="NCBIfam" id="NF000766">
    <property type="entry name" value="PRK00049.1"/>
    <property type="match status" value="1"/>
</dbReference>
<dbReference type="NCBIfam" id="NF009372">
    <property type="entry name" value="PRK12735.1"/>
    <property type="match status" value="1"/>
</dbReference>
<dbReference type="NCBIfam" id="NF009373">
    <property type="entry name" value="PRK12736.1"/>
    <property type="match status" value="1"/>
</dbReference>
<dbReference type="NCBIfam" id="TIGR00231">
    <property type="entry name" value="small_GTP"/>
    <property type="match status" value="1"/>
</dbReference>
<dbReference type="PANTHER" id="PTHR43721:SF22">
    <property type="entry name" value="ELONGATION FACTOR TU, MITOCHONDRIAL"/>
    <property type="match status" value="1"/>
</dbReference>
<dbReference type="PANTHER" id="PTHR43721">
    <property type="entry name" value="ELONGATION FACTOR TU-RELATED"/>
    <property type="match status" value="1"/>
</dbReference>
<dbReference type="Pfam" id="PF00009">
    <property type="entry name" value="GTP_EFTU"/>
    <property type="match status" value="1"/>
</dbReference>
<dbReference type="Pfam" id="PF03144">
    <property type="entry name" value="GTP_EFTU_D2"/>
    <property type="match status" value="1"/>
</dbReference>
<dbReference type="Pfam" id="PF03143">
    <property type="entry name" value="GTP_EFTU_D3"/>
    <property type="match status" value="1"/>
</dbReference>
<dbReference type="PRINTS" id="PR00315">
    <property type="entry name" value="ELONGATNFCT"/>
</dbReference>
<dbReference type="SUPFAM" id="SSF50465">
    <property type="entry name" value="EF-Tu/eEF-1alpha/eIF2-gamma C-terminal domain"/>
    <property type="match status" value="1"/>
</dbReference>
<dbReference type="SUPFAM" id="SSF52540">
    <property type="entry name" value="P-loop containing nucleoside triphosphate hydrolases"/>
    <property type="match status" value="1"/>
</dbReference>
<dbReference type="SUPFAM" id="SSF50447">
    <property type="entry name" value="Translation proteins"/>
    <property type="match status" value="1"/>
</dbReference>
<dbReference type="PROSITE" id="PS00301">
    <property type="entry name" value="G_TR_1"/>
    <property type="match status" value="1"/>
</dbReference>
<dbReference type="PROSITE" id="PS51722">
    <property type="entry name" value="G_TR_2"/>
    <property type="match status" value="1"/>
</dbReference>
<organism>
    <name type="scientific">Buchnera aphidicola subsp. Acyrthosiphon pisum (strain APS)</name>
    <name type="common">Acyrthosiphon pisum symbiotic bacterium</name>
    <dbReference type="NCBI Taxonomy" id="107806"/>
    <lineage>
        <taxon>Bacteria</taxon>
        <taxon>Pseudomonadati</taxon>
        <taxon>Pseudomonadota</taxon>
        <taxon>Gammaproteobacteria</taxon>
        <taxon>Enterobacterales</taxon>
        <taxon>Erwiniaceae</taxon>
        <taxon>Buchnera</taxon>
    </lineage>
</organism>